<sequence length="422" mass="49457">MYTHVDVVGIAEASAALYVQKDRDRYSDVLTTIENFIYQHKCIITGESAHLLFLKKNIYLYEFYSNNVAEHSKALATLLYKLDPEYLTRYTVLITKIPNHWYVINVDQREFVRLYAIPAVKQHLPIPILPFYCTSALTQQELFCLGPELQLIQIYSKLCNPNFVEEWPTLLDYEKSMRTLFLEQFPQRLEMTGGKKEEEEKHESIIKKIILEMVSTRQRIVVGGYIQKNLYNHVLKNRNRLQLITSLNIYEEKDIIQQFCDSNGLKIKIRINNPLLPTNPELRRLTIYFNNTNDDDQSYLIVDMYNTGSYELVPTNQINTLDGSFLIGTPFVQARFLLVEIWVLMLIAQQTKKDTKKIIQFFINQYEMLMNSPWPSMEALFPSSSKRYLGNYVDPNALIKWAQLKLKRIPPFYPGKPDEKSC</sequence>
<comment type="subcellular location">
    <subcellularLocation>
        <location evidence="1">Virion</location>
    </subcellularLocation>
</comment>
<comment type="induction">
    <text evidence="2">Expressed in the late phase of the viral replicative cycle.</text>
</comment>
<comment type="similarity">
    <text evidence="2">Belongs to the asfivirus K421R family.</text>
</comment>
<protein>
    <recommendedName>
        <fullName>Uncharacterized protein K421R</fullName>
        <shortName>pK421R</shortName>
    </recommendedName>
</protein>
<name>VF421_ASFWA</name>
<feature type="chain" id="PRO_0000373684" description="Uncharacterized protein K421R">
    <location>
        <begin position="1"/>
        <end position="422"/>
    </location>
</feature>
<organismHost>
    <name type="scientific">Ornithodoros</name>
    <name type="common">relapsing fever ticks</name>
    <dbReference type="NCBI Taxonomy" id="6937"/>
</organismHost>
<organismHost>
    <name type="scientific">Phacochoerus aethiopicus</name>
    <name type="common">Warthog</name>
    <dbReference type="NCBI Taxonomy" id="85517"/>
</organismHost>
<organismHost>
    <name type="scientific">Phacochoerus africanus</name>
    <name type="common">Warthog</name>
    <dbReference type="NCBI Taxonomy" id="41426"/>
</organismHost>
<organismHost>
    <name type="scientific">Potamochoerus larvatus</name>
    <name type="common">Bushpig</name>
    <dbReference type="NCBI Taxonomy" id="273792"/>
</organismHost>
<organismHost>
    <name type="scientific">Sus scrofa</name>
    <name type="common">Pig</name>
    <dbReference type="NCBI Taxonomy" id="9823"/>
</organismHost>
<proteinExistence type="inferred from homology"/>
<gene>
    <name type="ordered locus">War-062</name>
</gene>
<evidence type="ECO:0000250" key="1">
    <source>
        <dbReference type="UniProtKB" id="Q07384"/>
    </source>
</evidence>
<evidence type="ECO:0000305" key="2"/>
<keyword id="KW-0426">Late protein</keyword>
<keyword id="KW-0946">Virion</keyword>
<organism>
    <name type="scientific">African swine fever virus (isolate Warthog/Namibia/Wart80/1980)</name>
    <name type="common">ASFV</name>
    <dbReference type="NCBI Taxonomy" id="561444"/>
    <lineage>
        <taxon>Viruses</taxon>
        <taxon>Varidnaviria</taxon>
        <taxon>Bamfordvirae</taxon>
        <taxon>Nucleocytoviricota</taxon>
        <taxon>Pokkesviricetes</taxon>
        <taxon>Asfuvirales</taxon>
        <taxon>Asfarviridae</taxon>
        <taxon>Asfivirus</taxon>
        <taxon>African swine fever virus</taxon>
    </lineage>
</organism>
<accession>P0CAG9</accession>
<reference key="1">
    <citation type="submission" date="2003-03" db="EMBL/GenBank/DDBJ databases">
        <title>African swine fever virus genomes.</title>
        <authorList>
            <person name="Kutish G.F."/>
            <person name="Rock D.L."/>
        </authorList>
    </citation>
    <scope>NUCLEOTIDE SEQUENCE [LARGE SCALE GENOMIC DNA]</scope>
</reference>
<dbReference type="EMBL" id="AY261366">
    <property type="status" value="NOT_ANNOTATED_CDS"/>
    <property type="molecule type" value="Genomic_DNA"/>
</dbReference>
<dbReference type="Proteomes" id="UP000000858">
    <property type="component" value="Segment"/>
</dbReference>
<dbReference type="GO" id="GO:0044423">
    <property type="term" value="C:virion component"/>
    <property type="evidence" value="ECO:0007669"/>
    <property type="project" value="UniProtKB-KW"/>
</dbReference>